<keyword id="KW-0539">Nucleus</keyword>
<keyword id="KW-0597">Phosphoprotein</keyword>
<keyword id="KW-1185">Reference proteome</keyword>
<keyword id="KW-0819">tRNA processing</keyword>
<feature type="chain" id="PRO_0000236680" description="Ribonuclease P protein subunit p29">
    <location>
        <begin position="1"/>
        <end position="220"/>
    </location>
</feature>
<feature type="modified residue" description="Phosphoserine" evidence="1">
    <location>
        <position position="10"/>
    </location>
</feature>
<dbReference type="EMBL" id="BC112695">
    <property type="protein sequence ID" value="AAI12696.1"/>
    <property type="molecule type" value="mRNA"/>
</dbReference>
<dbReference type="RefSeq" id="NP_001106753.1">
    <property type="nucleotide sequence ID" value="NM_001113282.2"/>
</dbReference>
<dbReference type="SMR" id="Q2KIB9"/>
<dbReference type="FunCoup" id="Q2KIB9">
    <property type="interactions" value="3519"/>
</dbReference>
<dbReference type="STRING" id="9913.ENSBTAP00000002876"/>
<dbReference type="PaxDb" id="9913-ENSBTAP00000002876"/>
<dbReference type="GeneID" id="614870"/>
<dbReference type="KEGG" id="bta:614870"/>
<dbReference type="CTD" id="10775"/>
<dbReference type="VEuPathDB" id="HostDB:ENSBTAG00000002223"/>
<dbReference type="eggNOG" id="KOG4046">
    <property type="taxonomic scope" value="Eukaryota"/>
</dbReference>
<dbReference type="HOGENOM" id="CLU_078577_2_1_1"/>
<dbReference type="InParanoid" id="Q2KIB9"/>
<dbReference type="OMA" id="IPKSECV"/>
<dbReference type="OrthoDB" id="124041at2759"/>
<dbReference type="Proteomes" id="UP000009136">
    <property type="component" value="Chromosome 18"/>
</dbReference>
<dbReference type="Bgee" id="ENSBTAG00000002223">
    <property type="expression patterns" value="Expressed in oocyte and 102 other cell types or tissues"/>
</dbReference>
<dbReference type="GO" id="GO:0030681">
    <property type="term" value="C:multimeric ribonuclease P complex"/>
    <property type="evidence" value="ECO:0000250"/>
    <property type="project" value="UniProtKB"/>
</dbReference>
<dbReference type="GO" id="GO:0005730">
    <property type="term" value="C:nucleolus"/>
    <property type="evidence" value="ECO:0007669"/>
    <property type="project" value="UniProtKB-SubCell"/>
</dbReference>
<dbReference type="GO" id="GO:0000172">
    <property type="term" value="C:ribonuclease MRP complex"/>
    <property type="evidence" value="ECO:0000318"/>
    <property type="project" value="GO_Central"/>
</dbReference>
<dbReference type="GO" id="GO:0030677">
    <property type="term" value="C:ribonuclease P complex"/>
    <property type="evidence" value="ECO:0000318"/>
    <property type="project" value="GO_Central"/>
</dbReference>
<dbReference type="GO" id="GO:0004526">
    <property type="term" value="F:ribonuclease P activity"/>
    <property type="evidence" value="ECO:0007669"/>
    <property type="project" value="UniProtKB-EC"/>
</dbReference>
<dbReference type="GO" id="GO:0033204">
    <property type="term" value="F:ribonuclease P RNA binding"/>
    <property type="evidence" value="ECO:0000250"/>
    <property type="project" value="UniProtKB"/>
</dbReference>
<dbReference type="GO" id="GO:0006364">
    <property type="term" value="P:rRNA processing"/>
    <property type="evidence" value="ECO:0000318"/>
    <property type="project" value="GO_Central"/>
</dbReference>
<dbReference type="GO" id="GO:0001682">
    <property type="term" value="P:tRNA 5'-leader removal"/>
    <property type="evidence" value="ECO:0000250"/>
    <property type="project" value="UniProtKB"/>
</dbReference>
<dbReference type="FunFam" id="2.30.30.210:FF:000001">
    <property type="entry name" value="Ribonuclease P protein subunit p29"/>
    <property type="match status" value="1"/>
</dbReference>
<dbReference type="Gene3D" id="2.30.30.210">
    <property type="entry name" value="Ribonuclease P/MRP, subunit p29"/>
    <property type="match status" value="1"/>
</dbReference>
<dbReference type="InterPro" id="IPR016848">
    <property type="entry name" value="RNase_P/MRP_Rpp29-subunit"/>
</dbReference>
<dbReference type="InterPro" id="IPR036980">
    <property type="entry name" value="RNase_P/MRP_Rpp29_sf"/>
</dbReference>
<dbReference type="InterPro" id="IPR023534">
    <property type="entry name" value="Rof/RNase_P-like"/>
</dbReference>
<dbReference type="InterPro" id="IPR002730">
    <property type="entry name" value="Rpp29/RNP1"/>
</dbReference>
<dbReference type="PANTHER" id="PTHR13348:SF0">
    <property type="entry name" value="RIBONUCLEASE P PROTEIN SUBUNIT P29"/>
    <property type="match status" value="1"/>
</dbReference>
<dbReference type="PANTHER" id="PTHR13348">
    <property type="entry name" value="RIBONUCLEASE P SUBUNIT P29"/>
    <property type="match status" value="1"/>
</dbReference>
<dbReference type="Pfam" id="PF01868">
    <property type="entry name" value="RNase_P-MRP_p29"/>
    <property type="match status" value="1"/>
</dbReference>
<dbReference type="PIRSF" id="PIRSF027081">
    <property type="entry name" value="RNase_P/MRP_p29_subunit"/>
    <property type="match status" value="1"/>
</dbReference>
<dbReference type="SMART" id="SM00538">
    <property type="entry name" value="POP4"/>
    <property type="match status" value="1"/>
</dbReference>
<dbReference type="SUPFAM" id="SSF101744">
    <property type="entry name" value="Rof/RNase P subunit-like"/>
    <property type="match status" value="1"/>
</dbReference>
<comment type="function">
    <text evidence="1">Component of ribonuclease P, a ribonucleoprotein complex that generates mature tRNA molecules by cleaving their 5'-ends.</text>
</comment>
<comment type="subunit">
    <text evidence="1">Component of nuclear RNase P and RNase MRP ribonucleoproteins. RNase P consists of a catalytic RNA moiety and 10 different protein chains; POP1, POP4, POP5, POP7, RPP14, RPP21, RPP25, RPP30, RPP38 and RPP40. Within the RNase P complex, POP1, POP7 and RPP25 form the 'finger' subcomplex, POP5, RPP14, RPP40 and homodimeric RPP30 form the 'palm' subcomplex, and RPP21, POP4 and RPP38 form the 'wrist' subcomplex. All subunits of the RNase P complex interact with the catalytic RNA. Several subunits of RNase P are also part of the RNase MRP complex. RNase MRP consists of a catalytic RNA moiety and about 8 protein subunits; POP1, POP7, RPP25, RPP30, RPP38, RPP40 and possibly also POP4 and POP5.</text>
</comment>
<comment type="subcellular location">
    <subcellularLocation>
        <location evidence="1">Nucleus</location>
        <location evidence="1">Nucleolus</location>
    </subcellularLocation>
</comment>
<comment type="similarity">
    <text evidence="2">Belongs to the eukaryotic/archaeal RNase P protein component 1 family.</text>
</comment>
<evidence type="ECO:0000250" key="1">
    <source>
        <dbReference type="UniProtKB" id="O95707"/>
    </source>
</evidence>
<evidence type="ECO:0000305" key="2"/>
<gene>
    <name type="primary">POP4</name>
    <name type="synonym">RPP29</name>
</gene>
<organism>
    <name type="scientific">Bos taurus</name>
    <name type="common">Bovine</name>
    <dbReference type="NCBI Taxonomy" id="9913"/>
    <lineage>
        <taxon>Eukaryota</taxon>
        <taxon>Metazoa</taxon>
        <taxon>Chordata</taxon>
        <taxon>Craniata</taxon>
        <taxon>Vertebrata</taxon>
        <taxon>Euteleostomi</taxon>
        <taxon>Mammalia</taxon>
        <taxon>Eutheria</taxon>
        <taxon>Laurasiatheria</taxon>
        <taxon>Artiodactyla</taxon>
        <taxon>Ruminantia</taxon>
        <taxon>Pecora</taxon>
        <taxon>Bovidae</taxon>
        <taxon>Bovinae</taxon>
        <taxon>Bos</taxon>
    </lineage>
</organism>
<name>RPP29_BOVIN</name>
<protein>
    <recommendedName>
        <fullName>Ribonuclease P protein subunit p29</fullName>
    </recommendedName>
</protein>
<proteinExistence type="evidence at transcript level"/>
<reference key="1">
    <citation type="submission" date="2006-01" db="EMBL/GenBank/DDBJ databases">
        <authorList>
            <consortium name="NIH - Mammalian Gene Collection (MGC) project"/>
        </authorList>
    </citation>
    <scope>NUCLEOTIDE SEQUENCE [LARGE SCALE MRNA]</scope>
    <source>
        <strain>Hereford</strain>
        <tissue>Hypothalamus</tissue>
    </source>
</reference>
<accession>Q2KIB9</accession>
<sequence>MTSVVYHAFSQKEAKELDVQHSGAQRAEAFVRAFLKRSMPRMSQQALEDHLQRKAVVLEYFTHRKQKEKRKKSKGLSAKQRRELRLFDIKPEQQRYSLFLPLHELWKQYIRDLCNGLKPDTQPQMIQAKLLKADLHGAIVSVTKSKCPSYVGVTGILLQETKHVFKIITKEDRLKVIPKLNCVFTVEIDGFISYIYGSKFQLRSSERSAKKFKAKGTIDL</sequence>